<reference key="1">
    <citation type="journal article" date="2005" name="J. Bacteriol.">
        <title>Whole-genome sequencing of Staphylococcus haemolyticus uncovers the extreme plasticity of its genome and the evolution of human-colonizing staphylococcal species.</title>
        <authorList>
            <person name="Takeuchi F."/>
            <person name="Watanabe S."/>
            <person name="Baba T."/>
            <person name="Yuzawa H."/>
            <person name="Ito T."/>
            <person name="Morimoto Y."/>
            <person name="Kuroda M."/>
            <person name="Cui L."/>
            <person name="Takahashi M."/>
            <person name="Ankai A."/>
            <person name="Baba S."/>
            <person name="Fukui S."/>
            <person name="Lee J.C."/>
            <person name="Hiramatsu K."/>
        </authorList>
    </citation>
    <scope>NUCLEOTIDE SEQUENCE [LARGE SCALE GENOMIC DNA]</scope>
    <source>
        <strain>JCSC1435</strain>
    </source>
</reference>
<evidence type="ECO:0000250" key="1"/>
<evidence type="ECO:0000305" key="2"/>
<accession>Q4L3J1</accession>
<protein>
    <recommendedName>
        <fullName>Putative TrmH family tRNA/rRNA methyltransferase</fullName>
        <ecNumber>2.1.1.-</ecNumber>
    </recommendedName>
</protein>
<keyword id="KW-0489">Methyltransferase</keyword>
<keyword id="KW-0808">Transferase</keyword>
<gene>
    <name type="ordered locus">SH2477</name>
</gene>
<proteinExistence type="inferred from homology"/>
<comment type="similarity">
    <text evidence="2">Belongs to the class IV-like SAM-binding methyltransferase superfamily. RNA methyltransferase TrmH family.</text>
</comment>
<feature type="chain" id="PRO_0000224833" description="Putative TrmH family tRNA/rRNA methyltransferase">
    <location>
        <begin position="1"/>
        <end position="249"/>
    </location>
</feature>
<feature type="binding site" evidence="1">
    <location>
        <position position="196"/>
    </location>
    <ligand>
        <name>S-adenosyl-L-methionine</name>
        <dbReference type="ChEBI" id="CHEBI:59789"/>
    </ligand>
</feature>
<feature type="binding site" evidence="1">
    <location>
        <position position="216"/>
    </location>
    <ligand>
        <name>S-adenosyl-L-methionine</name>
        <dbReference type="ChEBI" id="CHEBI:59789"/>
    </ligand>
</feature>
<feature type="binding site" evidence="1">
    <location>
        <position position="225"/>
    </location>
    <ligand>
        <name>S-adenosyl-L-methionine</name>
        <dbReference type="ChEBI" id="CHEBI:59789"/>
    </ligand>
</feature>
<name>TRMHL_STAHJ</name>
<dbReference type="EC" id="2.1.1.-"/>
<dbReference type="EMBL" id="AP006716">
    <property type="protein sequence ID" value="BAE05786.1"/>
    <property type="molecule type" value="Genomic_DNA"/>
</dbReference>
<dbReference type="SMR" id="Q4L3J1"/>
<dbReference type="KEGG" id="sha:SH2477"/>
<dbReference type="eggNOG" id="COG0566">
    <property type="taxonomic scope" value="Bacteria"/>
</dbReference>
<dbReference type="HOGENOM" id="CLU_021322_0_1_9"/>
<dbReference type="OrthoDB" id="9794400at2"/>
<dbReference type="Proteomes" id="UP000000543">
    <property type="component" value="Chromosome"/>
</dbReference>
<dbReference type="GO" id="GO:0005829">
    <property type="term" value="C:cytosol"/>
    <property type="evidence" value="ECO:0007669"/>
    <property type="project" value="TreeGrafter"/>
</dbReference>
<dbReference type="GO" id="GO:0003723">
    <property type="term" value="F:RNA binding"/>
    <property type="evidence" value="ECO:0007669"/>
    <property type="project" value="InterPro"/>
</dbReference>
<dbReference type="GO" id="GO:0008173">
    <property type="term" value="F:RNA methyltransferase activity"/>
    <property type="evidence" value="ECO:0007669"/>
    <property type="project" value="InterPro"/>
</dbReference>
<dbReference type="GO" id="GO:0032259">
    <property type="term" value="P:methylation"/>
    <property type="evidence" value="ECO:0007669"/>
    <property type="project" value="UniProtKB-KW"/>
</dbReference>
<dbReference type="GO" id="GO:0006396">
    <property type="term" value="P:RNA processing"/>
    <property type="evidence" value="ECO:0007669"/>
    <property type="project" value="InterPro"/>
</dbReference>
<dbReference type="CDD" id="cd18103">
    <property type="entry name" value="SpoU-like_RlmB"/>
    <property type="match status" value="1"/>
</dbReference>
<dbReference type="FunFam" id="3.40.1280.10:FF:000008">
    <property type="entry name" value="Group 3 RNA methyltransferase TrmH"/>
    <property type="match status" value="1"/>
</dbReference>
<dbReference type="Gene3D" id="3.30.1330.30">
    <property type="match status" value="1"/>
</dbReference>
<dbReference type="Gene3D" id="3.40.1280.10">
    <property type="match status" value="1"/>
</dbReference>
<dbReference type="InterPro" id="IPR029028">
    <property type="entry name" value="Alpha/beta_knot_MTases"/>
</dbReference>
<dbReference type="InterPro" id="IPR029064">
    <property type="entry name" value="Ribosomal_eL30-like_sf"/>
</dbReference>
<dbReference type="InterPro" id="IPR004441">
    <property type="entry name" value="rRNA_MeTrfase_TrmH"/>
</dbReference>
<dbReference type="InterPro" id="IPR001537">
    <property type="entry name" value="SpoU_MeTrfase"/>
</dbReference>
<dbReference type="InterPro" id="IPR013123">
    <property type="entry name" value="SpoU_subst-bd"/>
</dbReference>
<dbReference type="InterPro" id="IPR029026">
    <property type="entry name" value="tRNA_m1G_MTases_N"/>
</dbReference>
<dbReference type="NCBIfam" id="TIGR00186">
    <property type="entry name" value="rRNA_methyl_3"/>
    <property type="match status" value="1"/>
</dbReference>
<dbReference type="PANTHER" id="PTHR46429">
    <property type="entry name" value="23S RRNA (GUANOSINE-2'-O-)-METHYLTRANSFERASE RLMB"/>
    <property type="match status" value="1"/>
</dbReference>
<dbReference type="PANTHER" id="PTHR46429:SF1">
    <property type="entry name" value="23S RRNA (GUANOSINE-2'-O-)-METHYLTRANSFERASE RLMB"/>
    <property type="match status" value="1"/>
</dbReference>
<dbReference type="Pfam" id="PF00588">
    <property type="entry name" value="SpoU_methylase"/>
    <property type="match status" value="1"/>
</dbReference>
<dbReference type="Pfam" id="PF08032">
    <property type="entry name" value="SpoU_sub_bind"/>
    <property type="match status" value="1"/>
</dbReference>
<dbReference type="SMART" id="SM00967">
    <property type="entry name" value="SpoU_sub_bind"/>
    <property type="match status" value="1"/>
</dbReference>
<dbReference type="SUPFAM" id="SSF75217">
    <property type="entry name" value="alpha/beta knot"/>
    <property type="match status" value="1"/>
</dbReference>
<dbReference type="SUPFAM" id="SSF55315">
    <property type="entry name" value="L30e-like"/>
    <property type="match status" value="1"/>
</dbReference>
<sequence>MEDIVIVGRHAVKEAIVSGHTINKIWIQEGIRKQQINDILQNAKEQKLIVQTVPKSKLDNLANAPHQGVAALIAPYEYADFDQFIQSQKDKEGLSTVVILDGLEDPHNLGSILRTADASGVDGVIIPKRRSVALTQTVAKASTGAIQHVPVMRVTNLAKTIDELKEHGYWVAGAEADNATDYRDMAADMPLAIVIGSEGQGMSRLVKDKCDFYIKIPMVGHVNSLNASVAASLMMYEVYRKRHQVGDNA</sequence>
<organism>
    <name type="scientific">Staphylococcus haemolyticus (strain JCSC1435)</name>
    <dbReference type="NCBI Taxonomy" id="279808"/>
    <lineage>
        <taxon>Bacteria</taxon>
        <taxon>Bacillati</taxon>
        <taxon>Bacillota</taxon>
        <taxon>Bacilli</taxon>
        <taxon>Bacillales</taxon>
        <taxon>Staphylococcaceae</taxon>
        <taxon>Staphylococcus</taxon>
    </lineage>
</organism>